<keyword id="KW-0007">Acetylation</keyword>
<keyword id="KW-0227">DNA damage</keyword>
<keyword id="KW-0378">Hydrolase</keyword>
<keyword id="KW-0464">Manganese</keyword>
<keyword id="KW-0479">Metal-binding</keyword>
<keyword id="KW-0489">Methyltransferase</keyword>
<keyword id="KW-0533">Nickel</keyword>
<keyword id="KW-0597">Phosphoprotein</keyword>
<keyword id="KW-1185">Reference proteome</keyword>
<keyword id="KW-0949">S-adenosyl-L-methionine</keyword>
<keyword id="KW-0808">Transferase</keyword>
<accession>Q4R526</accession>
<sequence>MAVVPASLSGQDVGSFAYLTIKDRIPQILTKVIDTLHRHKSEFFENHGEEGVEAEKKAISLLSKLRNELQTDKPIIPLVEKFVDTDIWNQYLEYQQSLLNESDGKSRWFYSPWLFVECYMYRRIHEAIIQSPPIDYFDVFKESKEQNFYESQESVIALCTHLQQLIKTIEDLDENQLKDEFFKLLQISLWGNKCDLSLSGGESSSQKTDVLNSLEDLKPFILLNDMEHLWSLLSNCKKTREKASVTRVYIVLDNSGFELVTDLILANFLLSSELATEVHFYGKTIPWFVSDTTIHDFNWLIEQVKHGNHKWMSKCGADWEEYVKMGKWVYHDHIFWTLPHEYCAMPQVAPDLYAELQKAHLILFKGDLNYRKLTGDRKWEFSVPFHQALNGFHPAPLCTIRTLKAEIQVGLKPGQGEQLMASEPCWWTSGKYGIFQYDGPL</sequence>
<feature type="initiator methionine" description="Removed" evidence="2">
    <location>
        <position position="1"/>
    </location>
</feature>
<feature type="chain" id="PRO_0000230796" description="Damage-control phosphatase ARMT1">
    <location>
        <begin position="2"/>
        <end position="441"/>
    </location>
</feature>
<feature type="short sequence motif" description="Subfamily III RTxK motif" evidence="1">
    <location>
        <begin position="401"/>
        <end position="404"/>
    </location>
</feature>
<feature type="binding site" evidence="1">
    <location>
        <begin position="253"/>
        <end position="254"/>
    </location>
    <ligand>
        <name>substrate</name>
    </ligand>
</feature>
<feature type="binding site" evidence="1">
    <location>
        <position position="253"/>
    </location>
    <ligand>
        <name>Mn(2+)</name>
        <dbReference type="ChEBI" id="CHEBI:29035"/>
        <note>catalytic</note>
    </ligand>
</feature>
<feature type="binding site" evidence="1">
    <location>
        <position position="254"/>
    </location>
    <ligand>
        <name>Mn(2+)</name>
        <dbReference type="ChEBI" id="CHEBI:29035"/>
        <note>catalytic</note>
    </ligand>
</feature>
<feature type="binding site" evidence="2">
    <location>
        <position position="258"/>
    </location>
    <ligand>
        <name>S-adenosyl-L-methionine</name>
        <dbReference type="ChEBI" id="CHEBI:59789"/>
    </ligand>
</feature>
<feature type="binding site" evidence="1">
    <location>
        <position position="291"/>
    </location>
    <ligand>
        <name>Mn(2+)</name>
        <dbReference type="ChEBI" id="CHEBI:29035"/>
        <note>catalytic</note>
    </ligand>
</feature>
<feature type="binding site" evidence="2">
    <location>
        <position position="291"/>
    </location>
    <ligand>
        <name>S-adenosyl-L-methionine</name>
        <dbReference type="ChEBI" id="CHEBI:59789"/>
    </ligand>
</feature>
<feature type="binding site" evidence="1">
    <location>
        <begin position="367"/>
        <end position="371"/>
    </location>
    <ligand>
        <name>substrate</name>
    </ligand>
</feature>
<feature type="binding site" evidence="1">
    <location>
        <position position="404"/>
    </location>
    <ligand>
        <name>substrate</name>
    </ligand>
</feature>
<feature type="modified residue" description="N-acetylalanine" evidence="2">
    <location>
        <position position="2"/>
    </location>
</feature>
<feature type="modified residue" description="N6-acetyllysine" evidence="2">
    <location>
        <position position="40"/>
    </location>
</feature>
<feature type="modified residue" description="Phosphoserine" evidence="2">
    <location>
        <position position="102"/>
    </location>
</feature>
<organism>
    <name type="scientific">Macaca fascicularis</name>
    <name type="common">Crab-eating macaque</name>
    <name type="synonym">Cynomolgus monkey</name>
    <dbReference type="NCBI Taxonomy" id="9541"/>
    <lineage>
        <taxon>Eukaryota</taxon>
        <taxon>Metazoa</taxon>
        <taxon>Chordata</taxon>
        <taxon>Craniata</taxon>
        <taxon>Vertebrata</taxon>
        <taxon>Euteleostomi</taxon>
        <taxon>Mammalia</taxon>
        <taxon>Eutheria</taxon>
        <taxon>Euarchontoglires</taxon>
        <taxon>Primates</taxon>
        <taxon>Haplorrhini</taxon>
        <taxon>Catarrhini</taxon>
        <taxon>Cercopithecidae</taxon>
        <taxon>Cercopithecinae</taxon>
        <taxon>Macaca</taxon>
    </lineage>
</organism>
<comment type="function">
    <text evidence="1 2">Metal-dependent phosphatase that shows phosphatase activity against several substrates, including fructose-1-phosphate and fructose-6-phosphate (By similarity). Its preference for fructose-1-phosphate, a strong glycating agent that causes DNA damage rather than a canonical yeast metabolite, suggests a damage-control function in hexose phosphate metabolism (By similarity). Has also been shown to have O-methyltransferase activity that methylates glutamate residues of target proteins to form gamma-glutamyl methyl ester residues (By similarity). Possibly methylates PCNA, suggesting it is involved in the DNA damage response (By similarity).</text>
</comment>
<comment type="catalytic activity">
    <reaction evidence="1">
        <text>beta-D-fructose 1-phosphate + H2O = D-fructose + phosphate</text>
        <dbReference type="Rhea" id="RHEA:35603"/>
        <dbReference type="ChEBI" id="CHEBI:15377"/>
        <dbReference type="ChEBI" id="CHEBI:37721"/>
        <dbReference type="ChEBI" id="CHEBI:43474"/>
        <dbReference type="ChEBI" id="CHEBI:138881"/>
    </reaction>
</comment>
<comment type="catalytic activity">
    <reaction evidence="1">
        <text>beta-D-fructose 6-phosphate = dihydroxyacetone + D-glyceraldehyde 3-phosphate</text>
        <dbReference type="Rhea" id="RHEA:28002"/>
        <dbReference type="ChEBI" id="CHEBI:16016"/>
        <dbReference type="ChEBI" id="CHEBI:57634"/>
        <dbReference type="ChEBI" id="CHEBI:59776"/>
    </reaction>
</comment>
<comment type="catalytic activity">
    <reaction evidence="2">
        <text>L-glutamyl-[protein] + S-adenosyl-L-methionine = [protein]-L-glutamate 5-O-methyl ester + S-adenosyl-L-homocysteine</text>
        <dbReference type="Rhea" id="RHEA:24452"/>
        <dbReference type="Rhea" id="RHEA-COMP:10208"/>
        <dbReference type="Rhea" id="RHEA-COMP:10311"/>
        <dbReference type="ChEBI" id="CHEBI:29973"/>
        <dbReference type="ChEBI" id="CHEBI:57856"/>
        <dbReference type="ChEBI" id="CHEBI:59789"/>
        <dbReference type="ChEBI" id="CHEBI:82795"/>
    </reaction>
</comment>
<comment type="cofactor">
    <cofactor evidence="1">
        <name>Mn(2+)</name>
        <dbReference type="ChEBI" id="CHEBI:29035"/>
    </cofactor>
    <cofactor evidence="1">
        <name>Ni(2+)</name>
        <dbReference type="ChEBI" id="CHEBI:49786"/>
    </cofactor>
</comment>
<comment type="domain">
    <text evidence="1">Subfamily III proteins have a conserved RTxK motif about 40-50 residues from the C-terminus; the threonine may be replaced by serine or cysteine.</text>
</comment>
<comment type="PTM">
    <text evidence="2">Automethylated.</text>
</comment>
<comment type="similarity">
    <text evidence="4">Belongs to the damage-control phosphatase family. Sugar phosphate phosphatase III subfamily.</text>
</comment>
<comment type="caution">
    <text evidence="2">Human C6orf211 has been reportedly associated with a protein carboxyl methyltransferase activity, but whether this protein indeed has such an activity remains to be determined (By similarity). It has been later shown to belong to a family of metal-dependent phosphatases implicated in metabolite damage-control (By similarity).</text>
</comment>
<comment type="sequence caution" evidence="4">
    <conflict type="frameshift">
        <sequence resource="EMBL-CDS" id="BAE01799"/>
    </conflict>
</comment>
<protein>
    <recommendedName>
        <fullName evidence="1">Damage-control phosphatase ARMT1</fullName>
        <ecNumber evidence="1">3.1.3.-</ecNumber>
    </recommendedName>
    <alternativeName>
        <fullName evidence="2">Acidic residue methyltransferase 1</fullName>
    </alternativeName>
    <alternativeName>
        <fullName evidence="2">Protein-glutamate O-methyltransferase</fullName>
        <ecNumber evidence="2">2.1.1.-</ecNumber>
    </alternativeName>
    <alternativeName>
        <fullName evidence="1">Sugar phosphate phosphatase ARMT1</fullName>
    </alternativeName>
</protein>
<dbReference type="EC" id="3.1.3.-" evidence="1"/>
<dbReference type="EC" id="2.1.1.-" evidence="2"/>
<dbReference type="EMBL" id="AB169718">
    <property type="protein sequence ID" value="BAE01799.1"/>
    <property type="status" value="ALT_FRAME"/>
    <property type="molecule type" value="mRNA"/>
</dbReference>
<dbReference type="SMR" id="Q4R526"/>
<dbReference type="STRING" id="9541.ENSMFAP00000021600"/>
<dbReference type="eggNOG" id="KOG3870">
    <property type="taxonomic scope" value="Eukaryota"/>
</dbReference>
<dbReference type="Proteomes" id="UP000233100">
    <property type="component" value="Unplaced"/>
</dbReference>
<dbReference type="GO" id="GO:0005634">
    <property type="term" value="C:nucleus"/>
    <property type="evidence" value="ECO:0007669"/>
    <property type="project" value="TreeGrafter"/>
</dbReference>
<dbReference type="GO" id="GO:0097023">
    <property type="term" value="F:fructose 6-phosphate aldolase activity"/>
    <property type="evidence" value="ECO:0007669"/>
    <property type="project" value="RHEA"/>
</dbReference>
<dbReference type="GO" id="GO:0103026">
    <property type="term" value="F:fructose-1-phosphatase activity"/>
    <property type="evidence" value="ECO:0007669"/>
    <property type="project" value="RHEA"/>
</dbReference>
<dbReference type="GO" id="GO:0046872">
    <property type="term" value="F:metal ion binding"/>
    <property type="evidence" value="ECO:0007669"/>
    <property type="project" value="UniProtKB-KW"/>
</dbReference>
<dbReference type="GO" id="GO:0051998">
    <property type="term" value="F:protein carboxyl O-methyltransferase activity"/>
    <property type="evidence" value="ECO:0000250"/>
    <property type="project" value="UniProtKB"/>
</dbReference>
<dbReference type="GO" id="GO:0008983">
    <property type="term" value="F:protein-glutamate O-methyltransferase activity"/>
    <property type="evidence" value="ECO:0007669"/>
    <property type="project" value="RHEA"/>
</dbReference>
<dbReference type="GO" id="GO:0008757">
    <property type="term" value="F:S-adenosylmethionine-dependent methyltransferase activity"/>
    <property type="evidence" value="ECO:0000250"/>
    <property type="project" value="UniProtKB"/>
</dbReference>
<dbReference type="GO" id="GO:0006974">
    <property type="term" value="P:DNA damage response"/>
    <property type="evidence" value="ECO:0000250"/>
    <property type="project" value="UniProtKB"/>
</dbReference>
<dbReference type="GO" id="GO:0032259">
    <property type="term" value="P:methylation"/>
    <property type="evidence" value="ECO:0007669"/>
    <property type="project" value="UniProtKB-KW"/>
</dbReference>
<dbReference type="FunFam" id="3.40.50.10880:FF:000002">
    <property type="entry name" value="Acidic residue methyltransferase 1"/>
    <property type="match status" value="1"/>
</dbReference>
<dbReference type="FunFam" id="1.20.930.60:FF:000001">
    <property type="entry name" value="protein-glutamate O-methyltransferase isoform X1"/>
    <property type="match status" value="1"/>
</dbReference>
<dbReference type="Gene3D" id="1.20.930.60">
    <property type="match status" value="1"/>
</dbReference>
<dbReference type="Gene3D" id="3.40.50.10880">
    <property type="entry name" value="Uncharacterised protein PF01937, DUF89, domain 3"/>
    <property type="match status" value="1"/>
</dbReference>
<dbReference type="InterPro" id="IPR036075">
    <property type="entry name" value="ARMT-1-like_metal-bd_sf"/>
</dbReference>
<dbReference type="InterPro" id="IPR039763">
    <property type="entry name" value="ARMT1"/>
</dbReference>
<dbReference type="InterPro" id="IPR002791">
    <property type="entry name" value="ARMT1-like_metal-bd"/>
</dbReference>
<dbReference type="PANTHER" id="PTHR12260">
    <property type="entry name" value="DAMAGE-CONTROL PHOSPHATASE ARMT1"/>
    <property type="match status" value="1"/>
</dbReference>
<dbReference type="PANTHER" id="PTHR12260:SF6">
    <property type="entry name" value="DAMAGE-CONTROL PHOSPHATASE ARMT1"/>
    <property type="match status" value="1"/>
</dbReference>
<dbReference type="Pfam" id="PF01937">
    <property type="entry name" value="ARMT1-like_dom"/>
    <property type="match status" value="1"/>
</dbReference>
<dbReference type="SUPFAM" id="SSF111321">
    <property type="entry name" value="AF1104-like"/>
    <property type="match status" value="1"/>
</dbReference>
<gene>
    <name evidence="2" type="primary">ARMT1</name>
    <name evidence="3" type="ORF">QflA-10880</name>
</gene>
<name>ARMT1_MACFA</name>
<proteinExistence type="evidence at transcript level"/>
<evidence type="ECO:0000250" key="1">
    <source>
        <dbReference type="UniProtKB" id="Q04371"/>
    </source>
</evidence>
<evidence type="ECO:0000250" key="2">
    <source>
        <dbReference type="UniProtKB" id="Q9H993"/>
    </source>
</evidence>
<evidence type="ECO:0000303" key="3">
    <source ref="1"/>
</evidence>
<evidence type="ECO:0000305" key="4"/>
<reference key="1">
    <citation type="submission" date="2005-06" db="EMBL/GenBank/DDBJ databases">
        <title>DNA sequences of macaque genes expressed in brain or testis and its evolutionary implications.</title>
        <authorList>
            <consortium name="International consortium for macaque cDNA sequencing and analysis"/>
        </authorList>
    </citation>
    <scope>NUCLEOTIDE SEQUENCE [LARGE SCALE MRNA]</scope>
    <source>
        <tissue>Frontal cortex</tissue>
    </source>
</reference>